<evidence type="ECO:0000250" key="1"/>
<evidence type="ECO:0000255" key="2"/>
<evidence type="ECO:0000269" key="3">
    <source>
    </source>
</evidence>
<evidence type="ECO:0000305" key="4"/>
<evidence type="ECO:0007829" key="5">
    <source>
        <dbReference type="PDB" id="6EHQ"/>
    </source>
</evidence>
<evidence type="ECO:0007829" key="6">
    <source>
        <dbReference type="PDB" id="6G7M"/>
    </source>
</evidence>
<evidence type="ECO:0007829" key="7">
    <source>
        <dbReference type="PDB" id="7NEM"/>
    </source>
</evidence>
<proteinExistence type="evidence at protein level"/>
<dbReference type="EC" id="1.12.99.6"/>
<dbReference type="EMBL" id="U09177">
    <property type="protein sequence ID" value="AAA21591.1"/>
    <property type="molecule type" value="Genomic_DNA"/>
</dbReference>
<dbReference type="EMBL" id="U28377">
    <property type="protein sequence ID" value="AAA69161.1"/>
    <property type="molecule type" value="Genomic_DNA"/>
</dbReference>
<dbReference type="EMBL" id="U00096">
    <property type="protein sequence ID" value="AAC76030.1"/>
    <property type="molecule type" value="Genomic_DNA"/>
</dbReference>
<dbReference type="EMBL" id="AP009048">
    <property type="protein sequence ID" value="BAE77055.1"/>
    <property type="molecule type" value="Genomic_DNA"/>
</dbReference>
<dbReference type="PIR" id="C55516">
    <property type="entry name" value="C55516"/>
</dbReference>
<dbReference type="RefSeq" id="NP_417468.1">
    <property type="nucleotide sequence ID" value="NC_000913.3"/>
</dbReference>
<dbReference type="RefSeq" id="WP_000083065.1">
    <property type="nucleotide sequence ID" value="NZ_STEB01000001.1"/>
</dbReference>
<dbReference type="PDB" id="6EHQ">
    <property type="method" value="X-ray"/>
    <property type="resolution" value="2.20 A"/>
    <property type="chains" value="L/M=1-552"/>
</dbReference>
<dbReference type="PDB" id="6EHS">
    <property type="method" value="X-ray"/>
    <property type="resolution" value="1.50 A"/>
    <property type="chains" value="L/M=1-552"/>
</dbReference>
<dbReference type="PDB" id="6EN9">
    <property type="method" value="X-ray"/>
    <property type="resolution" value="1.50 A"/>
    <property type="chains" value="L/M=1-567"/>
</dbReference>
<dbReference type="PDB" id="6G7M">
    <property type="method" value="X-ray"/>
    <property type="resolution" value="1.71 A"/>
    <property type="chains" value="L/M=1-567"/>
</dbReference>
<dbReference type="PDB" id="6GAM">
    <property type="method" value="X-ray"/>
    <property type="resolution" value="1.40 A"/>
    <property type="chains" value="L/M=1-567"/>
</dbReference>
<dbReference type="PDB" id="6GAN">
    <property type="method" value="X-ray"/>
    <property type="resolution" value="1.60 A"/>
    <property type="chains" value="L/M=1-567"/>
</dbReference>
<dbReference type="PDB" id="6SYO">
    <property type="method" value="X-ray"/>
    <property type="resolution" value="1.25 A"/>
    <property type="chains" value="LLL/MMM=1-567"/>
</dbReference>
<dbReference type="PDB" id="7NEM">
    <property type="method" value="X-ray"/>
    <property type="resolution" value="1.35 A"/>
    <property type="chains" value="L/M=1-567"/>
</dbReference>
<dbReference type="PDBsum" id="6EHQ"/>
<dbReference type="PDBsum" id="6EHS"/>
<dbReference type="PDBsum" id="6EN9"/>
<dbReference type="PDBsum" id="6G7M"/>
<dbReference type="PDBsum" id="6GAM"/>
<dbReference type="PDBsum" id="6GAN"/>
<dbReference type="PDBsum" id="6SYO"/>
<dbReference type="PDBsum" id="7NEM"/>
<dbReference type="SMR" id="P0ACE0"/>
<dbReference type="BioGRID" id="4262375">
    <property type="interactions" value="32"/>
</dbReference>
<dbReference type="ComplexPortal" id="CPX-282">
    <property type="entry name" value="Hydrogenase-2 complex"/>
</dbReference>
<dbReference type="DIP" id="DIP-36022N"/>
<dbReference type="FunCoup" id="P0ACE0">
    <property type="interactions" value="243"/>
</dbReference>
<dbReference type="IntAct" id="P0ACE0">
    <property type="interactions" value="16"/>
</dbReference>
<dbReference type="STRING" id="511145.b2994"/>
<dbReference type="TCDB" id="3.D.7.2.5">
    <property type="family name" value="the h2:heterodisulfide oxidoreductase (hho) family"/>
</dbReference>
<dbReference type="jPOST" id="P0ACE0"/>
<dbReference type="PaxDb" id="511145-b2994"/>
<dbReference type="EnsemblBacteria" id="AAC76030">
    <property type="protein sequence ID" value="AAC76030"/>
    <property type="gene ID" value="b2994"/>
</dbReference>
<dbReference type="GeneID" id="75203605"/>
<dbReference type="GeneID" id="945182"/>
<dbReference type="KEGG" id="ecj:JW2962"/>
<dbReference type="KEGG" id="eco:b2994"/>
<dbReference type="KEGG" id="ecoc:C3026_16375"/>
<dbReference type="PATRIC" id="fig|1411691.4.peg.3735"/>
<dbReference type="EchoBASE" id="EB1749"/>
<dbReference type="eggNOG" id="COG0374">
    <property type="taxonomic scope" value="Bacteria"/>
</dbReference>
<dbReference type="HOGENOM" id="CLU_030087_0_0_6"/>
<dbReference type="InParanoid" id="P0ACE0"/>
<dbReference type="OMA" id="NDEPGPY"/>
<dbReference type="OrthoDB" id="9761717at2"/>
<dbReference type="PhylomeDB" id="P0ACE0"/>
<dbReference type="BioCyc" id="EcoCyc:HYBC-MONOMER"/>
<dbReference type="BioCyc" id="MetaCyc:HYBC-MONOMER"/>
<dbReference type="PRO" id="PR:P0ACE0"/>
<dbReference type="Proteomes" id="UP000000625">
    <property type="component" value="Chromosome"/>
</dbReference>
<dbReference type="GO" id="GO:0005886">
    <property type="term" value="C:plasma membrane"/>
    <property type="evidence" value="ECO:0007669"/>
    <property type="project" value="UniProtKB-SubCell"/>
</dbReference>
<dbReference type="GO" id="GO:0008901">
    <property type="term" value="F:ferredoxin hydrogenase activity"/>
    <property type="evidence" value="ECO:0007669"/>
    <property type="project" value="InterPro"/>
</dbReference>
<dbReference type="GO" id="GO:0033748">
    <property type="term" value="F:hydrogenase (acceptor) activity"/>
    <property type="evidence" value="ECO:0007669"/>
    <property type="project" value="UniProtKB-EC"/>
</dbReference>
<dbReference type="GO" id="GO:0016151">
    <property type="term" value="F:nickel cation binding"/>
    <property type="evidence" value="ECO:0000255"/>
    <property type="project" value="EcoCyc"/>
</dbReference>
<dbReference type="FunFam" id="1.10.645.10:FF:000002">
    <property type="entry name" value="Hydrogenase 2 large subunit"/>
    <property type="match status" value="1"/>
</dbReference>
<dbReference type="Gene3D" id="1.10.645.10">
    <property type="entry name" value="Cytochrome-c3 Hydrogenase, chain B"/>
    <property type="match status" value="1"/>
</dbReference>
<dbReference type="InterPro" id="IPR001501">
    <property type="entry name" value="Ni-dep_hyd_lsu"/>
</dbReference>
<dbReference type="InterPro" id="IPR018194">
    <property type="entry name" value="Ni-dep_hyd_lsu_Ni_BS"/>
</dbReference>
<dbReference type="InterPro" id="IPR029014">
    <property type="entry name" value="NiFe-Hase_large"/>
</dbReference>
<dbReference type="InterPro" id="IPR050867">
    <property type="entry name" value="NiFe/NiFeSe_hydrgnase_LSU"/>
</dbReference>
<dbReference type="NCBIfam" id="NF007778">
    <property type="entry name" value="PRK10467.1"/>
    <property type="match status" value="1"/>
</dbReference>
<dbReference type="PANTHER" id="PTHR42958">
    <property type="entry name" value="HYDROGENASE-2 LARGE CHAIN"/>
    <property type="match status" value="1"/>
</dbReference>
<dbReference type="PANTHER" id="PTHR42958:SF1">
    <property type="entry name" value="HYDROGENASE-2 LARGE CHAIN"/>
    <property type="match status" value="1"/>
</dbReference>
<dbReference type="Pfam" id="PF00374">
    <property type="entry name" value="NiFeSe_Hases"/>
    <property type="match status" value="1"/>
</dbReference>
<dbReference type="SUPFAM" id="SSF56762">
    <property type="entry name" value="HydB/Nqo4-like"/>
    <property type="match status" value="1"/>
</dbReference>
<dbReference type="PROSITE" id="PS00507">
    <property type="entry name" value="NI_HGENASE_L_1"/>
    <property type="match status" value="1"/>
</dbReference>
<dbReference type="PROSITE" id="PS00508">
    <property type="entry name" value="NI_HGENASE_L_2"/>
    <property type="match status" value="1"/>
</dbReference>
<reference key="1">
    <citation type="journal article" date="1994" name="J. Bacteriol.">
        <title>Cloning, sequencing, and mutational analysis of the hyb operon encoding Escherichia coli hydrogenase 2.</title>
        <authorList>
            <person name="Menon N.K."/>
            <person name="Chatelus C.Y."/>
            <person name="Dervartanian M."/>
            <person name="Wendt J.C."/>
            <person name="Shanmugam K.T."/>
            <person name="Peck H.D. Jr."/>
            <person name="Przybyla A.E."/>
        </authorList>
    </citation>
    <scope>NUCLEOTIDE SEQUENCE [GENOMIC DNA]</scope>
    <source>
        <strain>K12 / TG1</strain>
    </source>
</reference>
<reference key="2">
    <citation type="journal article" date="1997" name="Science">
        <title>The complete genome sequence of Escherichia coli K-12.</title>
        <authorList>
            <person name="Blattner F.R."/>
            <person name="Plunkett G. III"/>
            <person name="Bloch C.A."/>
            <person name="Perna N.T."/>
            <person name="Burland V."/>
            <person name="Riley M."/>
            <person name="Collado-Vides J."/>
            <person name="Glasner J.D."/>
            <person name="Rode C.K."/>
            <person name="Mayhew G.F."/>
            <person name="Gregor J."/>
            <person name="Davis N.W."/>
            <person name="Kirkpatrick H.A."/>
            <person name="Goeden M.A."/>
            <person name="Rose D.J."/>
            <person name="Mau B."/>
            <person name="Shao Y."/>
        </authorList>
    </citation>
    <scope>NUCLEOTIDE SEQUENCE [LARGE SCALE GENOMIC DNA]</scope>
    <source>
        <strain>K12 / MG1655 / ATCC 47076</strain>
    </source>
</reference>
<reference key="3">
    <citation type="journal article" date="2006" name="Mol. Syst. Biol.">
        <title>Highly accurate genome sequences of Escherichia coli K-12 strains MG1655 and W3110.</title>
        <authorList>
            <person name="Hayashi K."/>
            <person name="Morooka N."/>
            <person name="Yamamoto Y."/>
            <person name="Fujita K."/>
            <person name="Isono K."/>
            <person name="Choi S."/>
            <person name="Ohtsubo E."/>
            <person name="Baba T."/>
            <person name="Wanner B.L."/>
            <person name="Mori H."/>
            <person name="Horiuchi T."/>
        </authorList>
    </citation>
    <scope>NUCLEOTIDE SEQUENCE [LARGE SCALE GENOMIC DNA]</scope>
    <source>
        <strain>K12 / W3110 / ATCC 27325 / DSM 5911</strain>
    </source>
</reference>
<reference key="4">
    <citation type="journal article" date="1998" name="Eur. J. Biochem.">
        <title>Reassignment of the gene encoding the Escherichia coli hydrogenase 2 small subunit -- identification of a soluble precursor of the small subunit in a hypB mutant.</title>
        <authorList>
            <person name="Sargent F."/>
            <person name="Ballantine S.P."/>
            <person name="Rugman P.A."/>
            <person name="Palmer T."/>
            <person name="Boxer D.H."/>
        </authorList>
    </citation>
    <scope>PROTEIN SEQUENCE OF 2-7</scope>
</reference>
<sequence>MSQRITIDPVTRIEGHLRIDCEIENGVVSKAWASGTMWRGMEEIVKNRDPRDAWMIVQRICGVCTTTHALSSVRAAESALNIDVPVNAQYIRNIILAAHTTHDHIVHFYQLSALDWVDITSALQADPTKASEMLKGVSTWHLNSPEEFTKVQNKIKDLVASGQLGIFANGYWGHPAMKLPPEVNLIAVAHYLQALECQRDANRVVALLGGKTPHIQNLAVGGVANPINLDGLGVLNLERLMYIKSFIDKLSDFVEQVYKVDTAVIAAFYPEWLTRGKGAVNYLSVPEFPTDSKNGSFLFPGGYIENADLSSYRPITSHSDEYLIKGIQESAKHSWYKDEAPQAPWEGTTIPAYDGWSDDGKYSWVKSPTFYGKTVEVGPLANMLVKLAAGRESTQNKLNEIVAIYQKLTGNTLEVAQLHSTLGRIIGRTVHCCELQDILQNQYSALITNIGKGDHTTFVKPNIPATGEFKGVGFLEAPRGMLSHWMVIKDGIISNYQAVVPSTWNSGPRNFNDDVGPYEQSLVGTPVADPNKPLEVVRTIHSFDPCMACAVHVVDADGNEVVSVKVL</sequence>
<keyword id="KW-0002">3D-structure</keyword>
<keyword id="KW-1003">Cell membrane</keyword>
<keyword id="KW-0903">Direct protein sequencing</keyword>
<keyword id="KW-0472">Membrane</keyword>
<keyword id="KW-0479">Metal-binding</keyword>
<keyword id="KW-0533">Nickel</keyword>
<keyword id="KW-0560">Oxidoreductase</keyword>
<keyword id="KW-1185">Reference proteome</keyword>
<organism>
    <name type="scientific">Escherichia coli (strain K12)</name>
    <dbReference type="NCBI Taxonomy" id="83333"/>
    <lineage>
        <taxon>Bacteria</taxon>
        <taxon>Pseudomonadati</taxon>
        <taxon>Pseudomonadota</taxon>
        <taxon>Gammaproteobacteria</taxon>
        <taxon>Enterobacterales</taxon>
        <taxon>Enterobacteriaceae</taxon>
        <taxon>Escherichia</taxon>
    </lineage>
</organism>
<name>MBHM_ECOLI</name>
<gene>
    <name type="primary">hybC</name>
    <name type="ordered locus">b2994</name>
    <name type="ordered locus">JW2962</name>
</gene>
<accession>P0ACE0</accession>
<accession>P37181</accession>
<accession>Q2M9K1</accession>
<comment type="function">
    <text>This is one of three E.coli hydrogenases synthesized in response to different physiological conditions. HYD2 is involved in hydrogen uptake.</text>
</comment>
<comment type="catalytic activity">
    <reaction>
        <text>H2 + A = AH2</text>
        <dbReference type="Rhea" id="RHEA:12116"/>
        <dbReference type="ChEBI" id="CHEBI:13193"/>
        <dbReference type="ChEBI" id="CHEBI:17499"/>
        <dbReference type="ChEBI" id="CHEBI:18276"/>
        <dbReference type="EC" id="1.12.99.6"/>
    </reaction>
</comment>
<comment type="cofactor">
    <cofactor evidence="1">
        <name>Ni(2+)</name>
        <dbReference type="ChEBI" id="CHEBI:49786"/>
    </cofactor>
    <text evidence="1">Binds 1 nickel ion per subunit.</text>
</comment>
<comment type="subunit">
    <text>Heterodimer of a large and a small subunit.</text>
</comment>
<comment type="interaction">
    <interactant intactId="EBI-549849">
        <id>P0ACE0</id>
    </interactant>
    <interactant intactId="EBI-562426">
        <id>P0AAM7</id>
        <label>hybG</label>
    </interactant>
    <organismsDiffer>false</organismsDiffer>
    <experiments>2</experiments>
</comment>
<comment type="subcellular location">
    <subcellularLocation>
        <location>Cell membrane</location>
        <topology>Peripheral membrane protein</topology>
    </subcellularLocation>
</comment>
<comment type="similarity">
    <text evidence="4">Belongs to the [NiFe]/[NiFeSe] hydrogenase large subunit family.</text>
</comment>
<protein>
    <recommendedName>
        <fullName>Hydrogenase-2 large chain</fullName>
        <shortName>HYD2</shortName>
        <ecNumber>1.12.99.6</ecNumber>
    </recommendedName>
    <alternativeName>
        <fullName>Membrane-bound hydrogenase 2 large subunit</fullName>
    </alternativeName>
    <alternativeName>
        <fullName>NiFe hydrogenase</fullName>
    </alternativeName>
</protein>
<feature type="initiator methionine" description="Removed" evidence="3">
    <location>
        <position position="1"/>
    </location>
</feature>
<feature type="chain" id="PRO_0000013407" description="Hydrogenase-2 large chain">
    <location>
        <begin position="2"/>
        <end position="552"/>
    </location>
</feature>
<feature type="propeptide" id="PRO_0000013408">
    <location>
        <begin position="553"/>
        <end position="567"/>
    </location>
</feature>
<feature type="binding site" evidence="2">
    <location>
        <position position="61"/>
    </location>
    <ligand>
        <name>Ni(2+)</name>
        <dbReference type="ChEBI" id="CHEBI:49786"/>
    </ligand>
</feature>
<feature type="binding site" evidence="2">
    <location>
        <position position="64"/>
    </location>
    <ligand>
        <name>Ni(2+)</name>
        <dbReference type="ChEBI" id="CHEBI:49786"/>
    </ligand>
</feature>
<feature type="binding site" evidence="2">
    <location>
        <position position="546"/>
    </location>
    <ligand>
        <name>Ni(2+)</name>
        <dbReference type="ChEBI" id="CHEBI:49786"/>
    </ligand>
</feature>
<feature type="binding site" evidence="2">
    <location>
        <position position="549"/>
    </location>
    <ligand>
        <name>Ni(2+)</name>
        <dbReference type="ChEBI" id="CHEBI:49786"/>
    </ligand>
</feature>
<feature type="site" description="Cleavage; by HybD">
    <location>
        <begin position="552"/>
        <end position="553"/>
    </location>
</feature>
<feature type="strand" evidence="7">
    <location>
        <begin position="3"/>
        <end position="7"/>
    </location>
</feature>
<feature type="strand" evidence="7">
    <location>
        <begin position="12"/>
        <end position="15"/>
    </location>
</feature>
<feature type="strand" evidence="7">
    <location>
        <begin position="17"/>
        <end position="24"/>
    </location>
</feature>
<feature type="strand" evidence="7">
    <location>
        <begin position="27"/>
        <end position="35"/>
    </location>
</feature>
<feature type="helix" evidence="7">
    <location>
        <begin position="41"/>
        <end position="45"/>
    </location>
</feature>
<feature type="helix" evidence="7">
    <location>
        <begin position="50"/>
        <end position="52"/>
    </location>
</feature>
<feature type="helix" evidence="7">
    <location>
        <begin position="53"/>
        <end position="57"/>
    </location>
</feature>
<feature type="helix" evidence="7">
    <location>
        <begin position="58"/>
        <end position="60"/>
    </location>
</feature>
<feature type="strand" evidence="7">
    <location>
        <begin position="62"/>
        <end position="64"/>
    </location>
</feature>
<feature type="helix" evidence="7">
    <location>
        <begin position="67"/>
        <end position="80"/>
    </location>
</feature>
<feature type="helix" evidence="7">
    <location>
        <begin position="86"/>
        <end position="109"/>
    </location>
</feature>
<feature type="turn" evidence="7">
    <location>
        <begin position="110"/>
        <end position="112"/>
    </location>
</feature>
<feature type="helix" evidence="7">
    <location>
        <begin position="113"/>
        <end position="115"/>
    </location>
</feature>
<feature type="helix" evidence="7">
    <location>
        <begin position="119"/>
        <end position="122"/>
    </location>
</feature>
<feature type="helix" evidence="7">
    <location>
        <begin position="127"/>
        <end position="133"/>
    </location>
</feature>
<feature type="turn" evidence="7">
    <location>
        <begin position="134"/>
        <end position="137"/>
    </location>
</feature>
<feature type="helix" evidence="7">
    <location>
        <begin position="145"/>
        <end position="160"/>
    </location>
</feature>
<feature type="helix" evidence="7">
    <location>
        <begin position="165"/>
        <end position="167"/>
    </location>
</feature>
<feature type="helix" evidence="7">
    <location>
        <begin position="181"/>
        <end position="209"/>
    </location>
</feature>
<feature type="strand" evidence="7">
    <location>
        <begin position="210"/>
        <end position="214"/>
    </location>
</feature>
<feature type="helix" evidence="7">
    <location>
        <begin position="237"/>
        <end position="247"/>
    </location>
</feature>
<feature type="turn" evidence="5">
    <location>
        <begin position="248"/>
        <end position="250"/>
    </location>
</feature>
<feature type="helix" evidence="7">
    <location>
        <begin position="251"/>
        <end position="256"/>
    </location>
</feature>
<feature type="helix" evidence="7">
    <location>
        <begin position="258"/>
        <end position="268"/>
    </location>
</feature>
<feature type="helix" evidence="7">
    <location>
        <begin position="270"/>
        <end position="273"/>
    </location>
</feature>
<feature type="strand" evidence="7">
    <location>
        <begin position="282"/>
        <end position="284"/>
    </location>
</feature>
<feature type="strand" evidence="7">
    <location>
        <begin position="287"/>
        <end position="289"/>
    </location>
</feature>
<feature type="strand" evidence="5">
    <location>
        <begin position="291"/>
        <end position="294"/>
    </location>
</feature>
<feature type="strand" evidence="7">
    <location>
        <begin position="297"/>
        <end position="299"/>
    </location>
</feature>
<feature type="strand" evidence="7">
    <location>
        <begin position="301"/>
        <end position="304"/>
    </location>
</feature>
<feature type="helix" evidence="7">
    <location>
        <begin position="309"/>
        <end position="311"/>
    </location>
</feature>
<feature type="strand" evidence="7">
    <location>
        <begin position="313"/>
        <end position="315"/>
    </location>
</feature>
<feature type="helix" evidence="7">
    <location>
        <begin position="321"/>
        <end position="326"/>
    </location>
</feature>
<feature type="strand" evidence="7">
    <location>
        <begin position="327"/>
        <end position="330"/>
    </location>
</feature>
<feature type="turn" evidence="7">
    <location>
        <begin position="332"/>
        <end position="335"/>
    </location>
</feature>
<feature type="helix" evidence="7">
    <location>
        <begin position="344"/>
        <end position="346"/>
    </location>
</feature>
<feature type="strand" evidence="6">
    <location>
        <begin position="363"/>
        <end position="365"/>
    </location>
</feature>
<feature type="strand" evidence="7">
    <location>
        <begin position="367"/>
        <end position="370"/>
    </location>
</feature>
<feature type="strand" evidence="5">
    <location>
        <begin position="376"/>
        <end position="378"/>
    </location>
</feature>
<feature type="helix" evidence="7">
    <location>
        <begin position="379"/>
        <end position="388"/>
    </location>
</feature>
<feature type="helix" evidence="7">
    <location>
        <begin position="392"/>
        <end position="409"/>
    </location>
</feature>
<feature type="helix" evidence="7">
    <location>
        <begin position="415"/>
        <end position="418"/>
    </location>
</feature>
<feature type="helix" evidence="7">
    <location>
        <begin position="421"/>
        <end position="451"/>
    </location>
</feature>
<feature type="strand" evidence="7">
    <location>
        <begin position="468"/>
        <end position="477"/>
    </location>
</feature>
<feature type="strand" evidence="7">
    <location>
        <begin position="480"/>
        <end position="489"/>
    </location>
</feature>
<feature type="strand" evidence="7">
    <location>
        <begin position="492"/>
        <end position="499"/>
    </location>
</feature>
<feature type="helix" evidence="7">
    <location>
        <begin position="501"/>
        <end position="506"/>
    </location>
</feature>
<feature type="helix" evidence="7">
    <location>
        <begin position="517"/>
        <end position="522"/>
    </location>
</feature>
<feature type="helix" evidence="7">
    <location>
        <begin position="534"/>
        <end position="542"/>
    </location>
</feature>
<feature type="helix" evidence="7">
    <location>
        <begin position="547"/>
        <end position="551"/>
    </location>
</feature>